<evidence type="ECO:0000250" key="1"/>
<evidence type="ECO:0000255" key="2">
    <source>
        <dbReference type="PROSITE-ProRule" id="PRU00092"/>
    </source>
</evidence>
<evidence type="ECO:0000255" key="3">
    <source>
        <dbReference type="PROSITE-ProRule" id="PRU00723"/>
    </source>
</evidence>
<evidence type="ECO:0000256" key="4">
    <source>
        <dbReference type="SAM" id="MobiDB-lite"/>
    </source>
</evidence>
<keyword id="KW-0238">DNA-binding</keyword>
<keyword id="KW-0479">Metal-binding</keyword>
<keyword id="KW-0539">Nucleus</keyword>
<keyword id="KW-0678">Repressor</keyword>
<keyword id="KW-0804">Transcription</keyword>
<keyword id="KW-0805">Transcription regulation</keyword>
<keyword id="KW-0862">Zinc</keyword>
<keyword id="KW-0863">Zinc-finger</keyword>
<sequence length="513" mass="58696">MEEYEAQLLVVEQALENAADEAQRQDLLALKNNLQELLALTRDTEDGAPTDELPQQGDDLDDELQRLRSELNDLEAAGSSQTALDEERQLADLRTKYTAMVGEKCSAPHEHSWGTCYHNALICGVDDEVVMSSEGVLDARLRVLFTNPTHREMLPCSYYLEGECRFDETKCRFSHGALVTGSSIRKYNPPDFHKLCRSRPVFALLPDRLWHRGRVLCVNFVEQVCRVRLDGQDHKERERDFKFEELYPLTTDQEEDDELSSEESNSSMNNESSDEAESDMDDLEEARRARMVELSLFTFKPTERLGAWEEFTRGIGSKLMEKMGYIHGTGLGSDGRGIVTPVSAQILPQGRSLDACMELREAANGDKDYFSVERKLKRAQRRQRKADEKAYVRESQRVDVFTFLNDSVLAPGESSQQGEQVAKKVKTNELQQHSTKTLNVETVRIADEIRRKQRDMAKVKQSLDRNSGDAQLQKRLQVQMQSHKQELATLQAQERSLSKEQQTRKSKNKMFEF</sequence>
<protein>
    <recommendedName>
        <fullName>Zinc finger CCCH-type with G patch domain-containing protein</fullName>
    </recommendedName>
</protein>
<reference key="1">
    <citation type="journal article" date="2007" name="Nature">
        <title>Evolution of genes and genomes on the Drosophila phylogeny.</title>
        <authorList>
            <consortium name="Drosophila 12 genomes consortium"/>
        </authorList>
    </citation>
    <scope>NUCLEOTIDE SEQUENCE [LARGE SCALE GENOMIC DNA]</scope>
    <source>
        <strain>Tucson 14021-0224.01</strain>
    </source>
</reference>
<comment type="function">
    <text evidence="1">Transcription repressor.</text>
</comment>
<comment type="subcellular location">
    <subcellularLocation>
        <location evidence="1">Nucleus</location>
    </subcellularLocation>
</comment>
<accession>B3N8L3</accession>
<dbReference type="EMBL" id="CH954177">
    <property type="protein sequence ID" value="EDV58436.1"/>
    <property type="molecule type" value="Genomic_DNA"/>
</dbReference>
<dbReference type="SMR" id="B3N8L3"/>
<dbReference type="EnsemblMetazoa" id="FBtr0130126">
    <property type="protein sequence ID" value="FBpp0128618"/>
    <property type="gene ID" value="FBgn0102384"/>
</dbReference>
<dbReference type="EnsemblMetazoa" id="XM_001969341.3">
    <property type="protein sequence ID" value="XP_001969377.1"/>
    <property type="gene ID" value="LOC6541394"/>
</dbReference>
<dbReference type="GeneID" id="6541394"/>
<dbReference type="KEGG" id="der:6541394"/>
<dbReference type="eggNOG" id="KOG2185">
    <property type="taxonomic scope" value="Eukaryota"/>
</dbReference>
<dbReference type="HOGENOM" id="CLU_040504_1_0_1"/>
<dbReference type="OMA" id="QYTRGIG"/>
<dbReference type="OrthoDB" id="5842926at2759"/>
<dbReference type="PhylomeDB" id="B3N8L3"/>
<dbReference type="Proteomes" id="UP000008711">
    <property type="component" value="Unassembled WGS sequence"/>
</dbReference>
<dbReference type="GO" id="GO:0005634">
    <property type="term" value="C:nucleus"/>
    <property type="evidence" value="ECO:0007669"/>
    <property type="project" value="UniProtKB-SubCell"/>
</dbReference>
<dbReference type="GO" id="GO:0001227">
    <property type="term" value="F:DNA-binding transcription repressor activity, RNA polymerase II-specific"/>
    <property type="evidence" value="ECO:0007669"/>
    <property type="project" value="TreeGrafter"/>
</dbReference>
<dbReference type="GO" id="GO:0000978">
    <property type="term" value="F:RNA polymerase II cis-regulatory region sequence-specific DNA binding"/>
    <property type="evidence" value="ECO:0007669"/>
    <property type="project" value="TreeGrafter"/>
</dbReference>
<dbReference type="GO" id="GO:0008270">
    <property type="term" value="F:zinc ion binding"/>
    <property type="evidence" value="ECO:0007669"/>
    <property type="project" value="UniProtKB-KW"/>
</dbReference>
<dbReference type="Gene3D" id="2.30.30.1190">
    <property type="match status" value="1"/>
</dbReference>
<dbReference type="InterPro" id="IPR000467">
    <property type="entry name" value="G_patch_dom"/>
</dbReference>
<dbReference type="InterPro" id="IPR000571">
    <property type="entry name" value="Znf_CCCH"/>
</dbReference>
<dbReference type="PANTHER" id="PTHR46297">
    <property type="entry name" value="ZINC FINGER CCCH-TYPE WITH G PATCH DOMAIN-CONTAINING PROTEIN"/>
    <property type="match status" value="1"/>
</dbReference>
<dbReference type="PANTHER" id="PTHR46297:SF1">
    <property type="entry name" value="ZINC FINGER CCCH-TYPE WITH G PATCH DOMAIN-CONTAINING PROTEIN"/>
    <property type="match status" value="1"/>
</dbReference>
<dbReference type="Pfam" id="PF01585">
    <property type="entry name" value="G-patch"/>
    <property type="match status" value="1"/>
</dbReference>
<dbReference type="SMART" id="SM00443">
    <property type="entry name" value="G_patch"/>
    <property type="match status" value="1"/>
</dbReference>
<dbReference type="PROSITE" id="PS50174">
    <property type="entry name" value="G_PATCH"/>
    <property type="match status" value="1"/>
</dbReference>
<dbReference type="PROSITE" id="PS50103">
    <property type="entry name" value="ZF_C3H1"/>
    <property type="match status" value="1"/>
</dbReference>
<proteinExistence type="inferred from homology"/>
<gene>
    <name type="ORF">GG10072</name>
</gene>
<organism>
    <name type="scientific">Drosophila erecta</name>
    <name type="common">Fruit fly</name>
    <dbReference type="NCBI Taxonomy" id="7220"/>
    <lineage>
        <taxon>Eukaryota</taxon>
        <taxon>Metazoa</taxon>
        <taxon>Ecdysozoa</taxon>
        <taxon>Arthropoda</taxon>
        <taxon>Hexapoda</taxon>
        <taxon>Insecta</taxon>
        <taxon>Pterygota</taxon>
        <taxon>Neoptera</taxon>
        <taxon>Endopterygota</taxon>
        <taxon>Diptera</taxon>
        <taxon>Brachycera</taxon>
        <taxon>Muscomorpha</taxon>
        <taxon>Ephydroidea</taxon>
        <taxon>Drosophilidae</taxon>
        <taxon>Drosophila</taxon>
        <taxon>Sophophora</taxon>
    </lineage>
</organism>
<feature type="chain" id="PRO_0000385201" description="Zinc finger CCCH-type with G patch domain-containing protein">
    <location>
        <begin position="1"/>
        <end position="513"/>
    </location>
</feature>
<feature type="domain" description="G-patch" evidence="2">
    <location>
        <begin position="312"/>
        <end position="358"/>
    </location>
</feature>
<feature type="zinc finger region" description="C3H1-type" evidence="3">
    <location>
        <begin position="155"/>
        <end position="178"/>
    </location>
</feature>
<feature type="region of interest" description="Disordered" evidence="4">
    <location>
        <begin position="252"/>
        <end position="282"/>
    </location>
</feature>
<feature type="region of interest" description="Disordered" evidence="4">
    <location>
        <begin position="478"/>
        <end position="513"/>
    </location>
</feature>
<feature type="compositionally biased region" description="Acidic residues" evidence="4">
    <location>
        <begin position="252"/>
        <end position="261"/>
    </location>
</feature>
<feature type="compositionally biased region" description="Low complexity" evidence="4">
    <location>
        <begin position="262"/>
        <end position="271"/>
    </location>
</feature>
<feature type="compositionally biased region" description="Acidic residues" evidence="4">
    <location>
        <begin position="272"/>
        <end position="282"/>
    </location>
</feature>
<feature type="compositionally biased region" description="Polar residues" evidence="4">
    <location>
        <begin position="478"/>
        <end position="495"/>
    </location>
</feature>
<feature type="compositionally biased region" description="Basic and acidic residues" evidence="4">
    <location>
        <begin position="496"/>
        <end position="513"/>
    </location>
</feature>
<name>ZGPAT_DROER</name>